<keyword id="KW-0997">Cell inner membrane</keyword>
<keyword id="KW-1003">Cell membrane</keyword>
<keyword id="KW-0472">Membrane</keyword>
<keyword id="KW-0520">NAD</keyword>
<keyword id="KW-0874">Quinone</keyword>
<keyword id="KW-1185">Reference proteome</keyword>
<keyword id="KW-1278">Translocase</keyword>
<keyword id="KW-0813">Transport</keyword>
<keyword id="KW-0830">Ubiquinone</keyword>
<accession>Q63VN0</accession>
<name>NUOD_BURPS</name>
<comment type="function">
    <text evidence="1">NDH-1 shuttles electrons from NADH, via FMN and iron-sulfur (Fe-S) centers, to quinones in the respiratory chain. The immediate electron acceptor for the enzyme in this species is believed to be ubiquinone. Couples the redox reaction to proton translocation (for every two electrons transferred, four hydrogen ions are translocated across the cytoplasmic membrane), and thus conserves the redox energy in a proton gradient.</text>
</comment>
<comment type="catalytic activity">
    <reaction evidence="1">
        <text>a quinone + NADH + 5 H(+)(in) = a quinol + NAD(+) + 4 H(+)(out)</text>
        <dbReference type="Rhea" id="RHEA:57888"/>
        <dbReference type="ChEBI" id="CHEBI:15378"/>
        <dbReference type="ChEBI" id="CHEBI:24646"/>
        <dbReference type="ChEBI" id="CHEBI:57540"/>
        <dbReference type="ChEBI" id="CHEBI:57945"/>
        <dbReference type="ChEBI" id="CHEBI:132124"/>
    </reaction>
</comment>
<comment type="subunit">
    <text evidence="1">NDH-1 is composed of 14 different subunits. Subunits NuoB, C, D, E, F, and G constitute the peripheral sector of the complex.</text>
</comment>
<comment type="subcellular location">
    <subcellularLocation>
        <location evidence="1">Cell inner membrane</location>
        <topology evidence="1">Peripheral membrane protein</topology>
        <orientation evidence="1">Cytoplasmic side</orientation>
    </subcellularLocation>
</comment>
<comment type="similarity">
    <text evidence="1">Belongs to the complex I 49 kDa subunit family.</text>
</comment>
<organism>
    <name type="scientific">Burkholderia pseudomallei (strain K96243)</name>
    <dbReference type="NCBI Taxonomy" id="272560"/>
    <lineage>
        <taxon>Bacteria</taxon>
        <taxon>Pseudomonadati</taxon>
        <taxon>Pseudomonadota</taxon>
        <taxon>Betaproteobacteria</taxon>
        <taxon>Burkholderiales</taxon>
        <taxon>Burkholderiaceae</taxon>
        <taxon>Burkholderia</taxon>
        <taxon>pseudomallei group</taxon>
    </lineage>
</organism>
<proteinExistence type="inferred from homology"/>
<feature type="chain" id="PRO_0000371835" description="NADH-quinone oxidoreductase subunit D">
    <location>
        <begin position="1"/>
        <end position="417"/>
    </location>
</feature>
<gene>
    <name evidence="1" type="primary">nuoD</name>
    <name type="ordered locus">BPSL1214</name>
</gene>
<dbReference type="EC" id="7.1.1.-" evidence="1"/>
<dbReference type="EMBL" id="BX571965">
    <property type="protein sequence ID" value="CAH35209.1"/>
    <property type="molecule type" value="Genomic_DNA"/>
</dbReference>
<dbReference type="RefSeq" id="WP_004185833.1">
    <property type="nucleotide sequence ID" value="NZ_CP009538.1"/>
</dbReference>
<dbReference type="RefSeq" id="YP_107836.1">
    <property type="nucleotide sequence ID" value="NC_006350.1"/>
</dbReference>
<dbReference type="SMR" id="Q63VN0"/>
<dbReference type="STRING" id="272560.BPSL1214"/>
<dbReference type="KEGG" id="bps:BPSL1214"/>
<dbReference type="PATRIC" id="fig|272560.51.peg.312"/>
<dbReference type="eggNOG" id="COG0649">
    <property type="taxonomic scope" value="Bacteria"/>
</dbReference>
<dbReference type="Proteomes" id="UP000000605">
    <property type="component" value="Chromosome 1"/>
</dbReference>
<dbReference type="GO" id="GO:0005886">
    <property type="term" value="C:plasma membrane"/>
    <property type="evidence" value="ECO:0007669"/>
    <property type="project" value="UniProtKB-SubCell"/>
</dbReference>
<dbReference type="GO" id="GO:0051287">
    <property type="term" value="F:NAD binding"/>
    <property type="evidence" value="ECO:0007669"/>
    <property type="project" value="InterPro"/>
</dbReference>
<dbReference type="GO" id="GO:0050136">
    <property type="term" value="F:NADH:ubiquinone reductase (non-electrogenic) activity"/>
    <property type="evidence" value="ECO:0007669"/>
    <property type="project" value="UniProtKB-UniRule"/>
</dbReference>
<dbReference type="GO" id="GO:0048038">
    <property type="term" value="F:quinone binding"/>
    <property type="evidence" value="ECO:0007669"/>
    <property type="project" value="UniProtKB-KW"/>
</dbReference>
<dbReference type="FunFam" id="1.10.645.10:FF:000005">
    <property type="entry name" value="NADH-quinone oxidoreductase subunit D"/>
    <property type="match status" value="1"/>
</dbReference>
<dbReference type="Gene3D" id="1.10.645.10">
    <property type="entry name" value="Cytochrome-c3 Hydrogenase, chain B"/>
    <property type="match status" value="1"/>
</dbReference>
<dbReference type="HAMAP" id="MF_01358">
    <property type="entry name" value="NDH1_NuoD"/>
    <property type="match status" value="1"/>
</dbReference>
<dbReference type="InterPro" id="IPR001135">
    <property type="entry name" value="NADH_Q_OxRdtase_suD"/>
</dbReference>
<dbReference type="InterPro" id="IPR014029">
    <property type="entry name" value="NADH_UbQ_OxRdtase_49kDa_CS"/>
</dbReference>
<dbReference type="InterPro" id="IPR022885">
    <property type="entry name" value="NDH1_su_D/H"/>
</dbReference>
<dbReference type="InterPro" id="IPR029014">
    <property type="entry name" value="NiFe-Hase_large"/>
</dbReference>
<dbReference type="NCBIfam" id="TIGR01962">
    <property type="entry name" value="NuoD"/>
    <property type="match status" value="1"/>
</dbReference>
<dbReference type="NCBIfam" id="NF004739">
    <property type="entry name" value="PRK06075.1"/>
    <property type="match status" value="1"/>
</dbReference>
<dbReference type="PANTHER" id="PTHR11993:SF10">
    <property type="entry name" value="NADH DEHYDROGENASE [UBIQUINONE] IRON-SULFUR PROTEIN 2, MITOCHONDRIAL"/>
    <property type="match status" value="1"/>
</dbReference>
<dbReference type="PANTHER" id="PTHR11993">
    <property type="entry name" value="NADH-UBIQUINONE OXIDOREDUCTASE 49 KDA SUBUNIT"/>
    <property type="match status" value="1"/>
</dbReference>
<dbReference type="Pfam" id="PF00346">
    <property type="entry name" value="Complex1_49kDa"/>
    <property type="match status" value="1"/>
</dbReference>
<dbReference type="SUPFAM" id="SSF56762">
    <property type="entry name" value="HydB/Nqo4-like"/>
    <property type="match status" value="1"/>
</dbReference>
<dbReference type="PROSITE" id="PS00535">
    <property type="entry name" value="COMPLEX1_49K"/>
    <property type="match status" value="1"/>
</dbReference>
<protein>
    <recommendedName>
        <fullName evidence="1">NADH-quinone oxidoreductase subunit D</fullName>
        <ecNumber evidence="1">7.1.1.-</ecNumber>
    </recommendedName>
    <alternativeName>
        <fullName evidence="1">NADH dehydrogenase I subunit D</fullName>
    </alternativeName>
    <alternativeName>
        <fullName evidence="1">NDH-1 subunit D</fullName>
    </alternativeName>
</protein>
<evidence type="ECO:0000255" key="1">
    <source>
        <dbReference type="HAMAP-Rule" id="MF_01358"/>
    </source>
</evidence>
<reference key="1">
    <citation type="journal article" date="2004" name="Proc. Natl. Acad. Sci. U.S.A.">
        <title>Genomic plasticity of the causative agent of melioidosis, Burkholderia pseudomallei.</title>
        <authorList>
            <person name="Holden M.T.G."/>
            <person name="Titball R.W."/>
            <person name="Peacock S.J."/>
            <person name="Cerdeno-Tarraga A.-M."/>
            <person name="Atkins T."/>
            <person name="Crossman L.C."/>
            <person name="Pitt T."/>
            <person name="Churcher C."/>
            <person name="Mungall K.L."/>
            <person name="Bentley S.D."/>
            <person name="Sebaihia M."/>
            <person name="Thomson N.R."/>
            <person name="Bason N."/>
            <person name="Beacham I.R."/>
            <person name="Brooks K."/>
            <person name="Brown K.A."/>
            <person name="Brown N.F."/>
            <person name="Challis G.L."/>
            <person name="Cherevach I."/>
            <person name="Chillingworth T."/>
            <person name="Cronin A."/>
            <person name="Crossett B."/>
            <person name="Davis P."/>
            <person name="DeShazer D."/>
            <person name="Feltwell T."/>
            <person name="Fraser A."/>
            <person name="Hance Z."/>
            <person name="Hauser H."/>
            <person name="Holroyd S."/>
            <person name="Jagels K."/>
            <person name="Keith K.E."/>
            <person name="Maddison M."/>
            <person name="Moule S."/>
            <person name="Price C."/>
            <person name="Quail M.A."/>
            <person name="Rabbinowitsch E."/>
            <person name="Rutherford K."/>
            <person name="Sanders M."/>
            <person name="Simmonds M."/>
            <person name="Songsivilai S."/>
            <person name="Stevens K."/>
            <person name="Tumapa S."/>
            <person name="Vesaratchavest M."/>
            <person name="Whitehead S."/>
            <person name="Yeats C."/>
            <person name="Barrell B.G."/>
            <person name="Oyston P.C.F."/>
            <person name="Parkhill J."/>
        </authorList>
    </citation>
    <scope>NUCLEOTIDE SEQUENCE [LARGE SCALE GENOMIC DNA]</scope>
    <source>
        <strain>K96243</strain>
    </source>
</reference>
<sequence length="417" mass="47507">MAEIKNYTLNFGPQHPAAHGVLRLVLELDGEVIQRADPHIGLLHRATEKLAENKTFIQSVPYMDRLDYVSMMVNEHGYVLAIEKLLGIEVPERAQYIRVLFDEITRVLNHLMWIGAHALDVGAMAVFLYAFREREDLMDVYEAVSGARMHAAYYRPGGVYRDLPEAMPQYKASKIRNERALAKMNEARSGSVLDFIDDFFTRFPKCVDEYETLLTDNRIWKQRLVGIGVVSPERALQLGLTGPMIRGSGIAWDLRKKQPYEVYDRLDFDIPVGVNGDCYDRYLVRVEEMRQSTRIAKQCIEWLRKNPGPVITDNHKVAPPSRVGMKTNMEDLIHHFKLFTEGFHVPEGETYAAVEHPKGEFGIYLVSDGANKPYRLKIRAPGYAHLSALDEMARGHMIADAVTIIGTQDIVFGEIDR</sequence>